<comment type="function">
    <text evidence="1">DNA-dependent RNA polymerase catalyzes the transcription of DNA into RNA using the four ribonucleoside triphosphates as substrates.</text>
</comment>
<comment type="catalytic activity">
    <reaction evidence="1">
        <text>RNA(n) + a ribonucleoside 5'-triphosphate = RNA(n+1) + diphosphate</text>
        <dbReference type="Rhea" id="RHEA:21248"/>
        <dbReference type="Rhea" id="RHEA-COMP:14527"/>
        <dbReference type="Rhea" id="RHEA-COMP:17342"/>
        <dbReference type="ChEBI" id="CHEBI:33019"/>
        <dbReference type="ChEBI" id="CHEBI:61557"/>
        <dbReference type="ChEBI" id="CHEBI:140395"/>
        <dbReference type="EC" id="2.7.7.6"/>
    </reaction>
</comment>
<comment type="subunit">
    <text evidence="1">Homodimer. The RNAP catalytic core consists of 2 alpha, 1 beta, 1 beta' and 1 omega subunit. When a sigma factor is associated with the core the holoenzyme is formed, which can initiate transcription.</text>
</comment>
<comment type="domain">
    <text evidence="1">The N-terminal domain is essential for RNAP assembly and basal transcription, whereas the C-terminal domain is involved in interaction with transcriptional regulators and with upstream promoter elements.</text>
</comment>
<comment type="similarity">
    <text evidence="1">Belongs to the RNA polymerase alpha chain family.</text>
</comment>
<sequence>MLIAQRPTLTEESISEFRSRFVIEPLEPGFGYTLGNSLRRTLLSSIPGAAVTSIRIDGVLHEFSTVPGVKEDVTEIILNIKGLVVSSEHDEPITAYLRKQGAGQVTAADISAPAGVEIHNPELVIATLNEKAKFELELTIERGRGYVSATQNRSEFSEAGQIPVDSIYSPVLKVTYRVEATRAGERTDFDRLVVDVETKSAITPRDAIASAGRTLTELFGLARELNSAAEGIEIGPAPVDAVLSSELSMPIEDLDLSVRSYNCLKREGIHNVSELVALSETQLMNIRNFGQKSVDEVKDKLVELGLSLKDAVPGFDGAHYYSYDEDETTTN</sequence>
<accession>B0RB72</accession>
<gene>
    <name evidence="1" type="primary">rpoA</name>
    <name type="ordered locus">CMS0316</name>
</gene>
<reference key="1">
    <citation type="journal article" date="2008" name="J. Bacteriol.">
        <title>Genome of the actinomycete plant pathogen Clavibacter michiganensis subsp. sepedonicus suggests recent niche adaptation.</title>
        <authorList>
            <person name="Bentley S.D."/>
            <person name="Corton C."/>
            <person name="Brown S.E."/>
            <person name="Barron A."/>
            <person name="Clark L."/>
            <person name="Doggett J."/>
            <person name="Harris B."/>
            <person name="Ormond D."/>
            <person name="Quail M.A."/>
            <person name="May G."/>
            <person name="Francis D."/>
            <person name="Knudson D."/>
            <person name="Parkhill J."/>
            <person name="Ishimaru C.A."/>
        </authorList>
    </citation>
    <scope>NUCLEOTIDE SEQUENCE [LARGE SCALE GENOMIC DNA]</scope>
    <source>
        <strain>ATCC 33113 / DSM 20744 / JCM 9667 / LMG 2889 / ICMP 2535 / C-1</strain>
    </source>
</reference>
<keyword id="KW-0240">DNA-directed RNA polymerase</keyword>
<keyword id="KW-0548">Nucleotidyltransferase</keyword>
<keyword id="KW-0804">Transcription</keyword>
<keyword id="KW-0808">Transferase</keyword>
<organism>
    <name type="scientific">Clavibacter sepedonicus</name>
    <name type="common">Clavibacter michiganensis subsp. sepedonicus</name>
    <dbReference type="NCBI Taxonomy" id="31964"/>
    <lineage>
        <taxon>Bacteria</taxon>
        <taxon>Bacillati</taxon>
        <taxon>Actinomycetota</taxon>
        <taxon>Actinomycetes</taxon>
        <taxon>Micrococcales</taxon>
        <taxon>Microbacteriaceae</taxon>
        <taxon>Clavibacter</taxon>
    </lineage>
</organism>
<feature type="chain" id="PRO_1000075004" description="DNA-directed RNA polymerase subunit alpha">
    <location>
        <begin position="1"/>
        <end position="331"/>
    </location>
</feature>
<feature type="region of interest" description="Alpha N-terminal domain (alpha-NTD)" evidence="1">
    <location>
        <begin position="1"/>
        <end position="226"/>
    </location>
</feature>
<feature type="region of interest" description="Alpha C-terminal domain (alpha-CTD)" evidence="1">
    <location>
        <begin position="243"/>
        <end position="331"/>
    </location>
</feature>
<evidence type="ECO:0000255" key="1">
    <source>
        <dbReference type="HAMAP-Rule" id="MF_00059"/>
    </source>
</evidence>
<dbReference type="EC" id="2.7.7.6" evidence="1"/>
<dbReference type="EMBL" id="AM849034">
    <property type="protein sequence ID" value="CAQ00437.1"/>
    <property type="molecule type" value="Genomic_DNA"/>
</dbReference>
<dbReference type="RefSeq" id="WP_012297777.1">
    <property type="nucleotide sequence ID" value="NZ_MZMN01000003.1"/>
</dbReference>
<dbReference type="SMR" id="B0RB72"/>
<dbReference type="STRING" id="31964.CMS0316"/>
<dbReference type="KEGG" id="cms:CMS0316"/>
<dbReference type="eggNOG" id="COG0202">
    <property type="taxonomic scope" value="Bacteria"/>
</dbReference>
<dbReference type="HOGENOM" id="CLU_053084_0_1_11"/>
<dbReference type="OrthoDB" id="9805706at2"/>
<dbReference type="Proteomes" id="UP000001318">
    <property type="component" value="Chromosome"/>
</dbReference>
<dbReference type="GO" id="GO:0005737">
    <property type="term" value="C:cytoplasm"/>
    <property type="evidence" value="ECO:0007669"/>
    <property type="project" value="UniProtKB-ARBA"/>
</dbReference>
<dbReference type="GO" id="GO:0000428">
    <property type="term" value="C:DNA-directed RNA polymerase complex"/>
    <property type="evidence" value="ECO:0007669"/>
    <property type="project" value="UniProtKB-KW"/>
</dbReference>
<dbReference type="GO" id="GO:0003677">
    <property type="term" value="F:DNA binding"/>
    <property type="evidence" value="ECO:0007669"/>
    <property type="project" value="UniProtKB-UniRule"/>
</dbReference>
<dbReference type="GO" id="GO:0003899">
    <property type="term" value="F:DNA-directed RNA polymerase activity"/>
    <property type="evidence" value="ECO:0007669"/>
    <property type="project" value="UniProtKB-UniRule"/>
</dbReference>
<dbReference type="GO" id="GO:0046983">
    <property type="term" value="F:protein dimerization activity"/>
    <property type="evidence" value="ECO:0007669"/>
    <property type="project" value="InterPro"/>
</dbReference>
<dbReference type="GO" id="GO:0006351">
    <property type="term" value="P:DNA-templated transcription"/>
    <property type="evidence" value="ECO:0007669"/>
    <property type="project" value="UniProtKB-UniRule"/>
</dbReference>
<dbReference type="CDD" id="cd06928">
    <property type="entry name" value="RNAP_alpha_NTD"/>
    <property type="match status" value="1"/>
</dbReference>
<dbReference type="FunFam" id="1.10.150.20:FF:000001">
    <property type="entry name" value="DNA-directed RNA polymerase subunit alpha"/>
    <property type="match status" value="1"/>
</dbReference>
<dbReference type="FunFam" id="2.170.120.12:FF:000001">
    <property type="entry name" value="DNA-directed RNA polymerase subunit alpha"/>
    <property type="match status" value="1"/>
</dbReference>
<dbReference type="Gene3D" id="1.10.150.20">
    <property type="entry name" value="5' to 3' exonuclease, C-terminal subdomain"/>
    <property type="match status" value="1"/>
</dbReference>
<dbReference type="Gene3D" id="2.170.120.12">
    <property type="entry name" value="DNA-directed RNA polymerase, insert domain"/>
    <property type="match status" value="1"/>
</dbReference>
<dbReference type="Gene3D" id="3.30.1360.10">
    <property type="entry name" value="RNA polymerase, RBP11-like subunit"/>
    <property type="match status" value="1"/>
</dbReference>
<dbReference type="HAMAP" id="MF_00059">
    <property type="entry name" value="RNApol_bact_RpoA"/>
    <property type="match status" value="1"/>
</dbReference>
<dbReference type="InterPro" id="IPR011262">
    <property type="entry name" value="DNA-dir_RNA_pol_insert"/>
</dbReference>
<dbReference type="InterPro" id="IPR011263">
    <property type="entry name" value="DNA-dir_RNA_pol_RpoA/D/Rpb3"/>
</dbReference>
<dbReference type="InterPro" id="IPR011773">
    <property type="entry name" value="DNA-dir_RpoA"/>
</dbReference>
<dbReference type="InterPro" id="IPR036603">
    <property type="entry name" value="RBP11-like"/>
</dbReference>
<dbReference type="InterPro" id="IPR011260">
    <property type="entry name" value="RNAP_asu_C"/>
</dbReference>
<dbReference type="InterPro" id="IPR036643">
    <property type="entry name" value="RNApol_insert_sf"/>
</dbReference>
<dbReference type="NCBIfam" id="NF003513">
    <property type="entry name" value="PRK05182.1-2"/>
    <property type="match status" value="1"/>
</dbReference>
<dbReference type="NCBIfam" id="NF003514">
    <property type="entry name" value="PRK05182.1-4"/>
    <property type="match status" value="1"/>
</dbReference>
<dbReference type="NCBIfam" id="NF003519">
    <property type="entry name" value="PRK05182.2-5"/>
    <property type="match status" value="1"/>
</dbReference>
<dbReference type="NCBIfam" id="TIGR02027">
    <property type="entry name" value="rpoA"/>
    <property type="match status" value="1"/>
</dbReference>
<dbReference type="Pfam" id="PF01000">
    <property type="entry name" value="RNA_pol_A_bac"/>
    <property type="match status" value="1"/>
</dbReference>
<dbReference type="Pfam" id="PF03118">
    <property type="entry name" value="RNA_pol_A_CTD"/>
    <property type="match status" value="1"/>
</dbReference>
<dbReference type="Pfam" id="PF01193">
    <property type="entry name" value="RNA_pol_L"/>
    <property type="match status" value="1"/>
</dbReference>
<dbReference type="SMART" id="SM00662">
    <property type="entry name" value="RPOLD"/>
    <property type="match status" value="1"/>
</dbReference>
<dbReference type="SUPFAM" id="SSF47789">
    <property type="entry name" value="C-terminal domain of RNA polymerase alpha subunit"/>
    <property type="match status" value="1"/>
</dbReference>
<dbReference type="SUPFAM" id="SSF56553">
    <property type="entry name" value="Insert subdomain of RNA polymerase alpha subunit"/>
    <property type="match status" value="1"/>
</dbReference>
<dbReference type="SUPFAM" id="SSF55257">
    <property type="entry name" value="RBP11-like subunits of RNA polymerase"/>
    <property type="match status" value="1"/>
</dbReference>
<name>RPOA_CLASE</name>
<proteinExistence type="inferred from homology"/>
<protein>
    <recommendedName>
        <fullName evidence="1">DNA-directed RNA polymerase subunit alpha</fullName>
        <shortName evidence="1">RNAP subunit alpha</shortName>
        <ecNumber evidence="1">2.7.7.6</ecNumber>
    </recommendedName>
    <alternativeName>
        <fullName evidence="1">RNA polymerase subunit alpha</fullName>
    </alternativeName>
    <alternativeName>
        <fullName evidence="1">Transcriptase subunit alpha</fullName>
    </alternativeName>
</protein>